<evidence type="ECO:0000255" key="1">
    <source>
        <dbReference type="HAMAP-Rule" id="MF_01310"/>
    </source>
</evidence>
<evidence type="ECO:0000305" key="2"/>
<organism>
    <name type="scientific">Acidiphilium cryptum (strain JF-5)</name>
    <dbReference type="NCBI Taxonomy" id="349163"/>
    <lineage>
        <taxon>Bacteria</taxon>
        <taxon>Pseudomonadati</taxon>
        <taxon>Pseudomonadota</taxon>
        <taxon>Alphaproteobacteria</taxon>
        <taxon>Acetobacterales</taxon>
        <taxon>Acidocellaceae</taxon>
        <taxon>Acidiphilium</taxon>
    </lineage>
</organism>
<accession>A5FZU2</accession>
<feature type="chain" id="PRO_0000323331" description="Small ribosomal subunit protein uS11">
    <location>
        <begin position="1"/>
        <end position="130"/>
    </location>
</feature>
<gene>
    <name evidence="1" type="primary">rpsK</name>
    <name type="ordered locus">Acry_1923</name>
</gene>
<reference key="1">
    <citation type="submission" date="2007-05" db="EMBL/GenBank/DDBJ databases">
        <title>Complete sequence of chromosome of Acidiphilium cryptum JF-5.</title>
        <authorList>
            <consortium name="US DOE Joint Genome Institute"/>
            <person name="Copeland A."/>
            <person name="Lucas S."/>
            <person name="Lapidus A."/>
            <person name="Barry K."/>
            <person name="Detter J.C."/>
            <person name="Glavina del Rio T."/>
            <person name="Hammon N."/>
            <person name="Israni S."/>
            <person name="Dalin E."/>
            <person name="Tice H."/>
            <person name="Pitluck S."/>
            <person name="Sims D."/>
            <person name="Brettin T."/>
            <person name="Bruce D."/>
            <person name="Han C."/>
            <person name="Schmutz J."/>
            <person name="Larimer F."/>
            <person name="Land M."/>
            <person name="Hauser L."/>
            <person name="Kyrpides N."/>
            <person name="Kim E."/>
            <person name="Magnuson T."/>
            <person name="Richardson P."/>
        </authorList>
    </citation>
    <scope>NUCLEOTIDE SEQUENCE [LARGE SCALE GENOMIC DNA]</scope>
    <source>
        <strain>JF-5</strain>
    </source>
</reference>
<keyword id="KW-1185">Reference proteome</keyword>
<keyword id="KW-0687">Ribonucleoprotein</keyword>
<keyword id="KW-0689">Ribosomal protein</keyword>
<keyword id="KW-0694">RNA-binding</keyword>
<keyword id="KW-0699">rRNA-binding</keyword>
<name>RS11_ACICJ</name>
<protein>
    <recommendedName>
        <fullName evidence="1">Small ribosomal subunit protein uS11</fullName>
    </recommendedName>
    <alternativeName>
        <fullName evidence="2">30S ribosomal protein S11</fullName>
    </alternativeName>
</protein>
<proteinExistence type="inferred from homology"/>
<sequence>MAKAASTRPRRKERKNISSGVAHVLASFNNTMVTISDAQGNAISWSSAGSQGFKGSRKSTPYAAQVAAEDAGRKAREHGMETLEIEVSGPGAGRESALRALQTIGFSITAIRDLTPIPHNGCRPRKRRRV</sequence>
<dbReference type="EMBL" id="CP000697">
    <property type="protein sequence ID" value="ABQ31124.1"/>
    <property type="molecule type" value="Genomic_DNA"/>
</dbReference>
<dbReference type="RefSeq" id="WP_007424196.1">
    <property type="nucleotide sequence ID" value="NC_009484.1"/>
</dbReference>
<dbReference type="SMR" id="A5FZU2"/>
<dbReference type="STRING" id="349163.Acry_1923"/>
<dbReference type="KEGG" id="acr:Acry_1923"/>
<dbReference type="eggNOG" id="COG0100">
    <property type="taxonomic scope" value="Bacteria"/>
</dbReference>
<dbReference type="HOGENOM" id="CLU_072439_5_0_5"/>
<dbReference type="Proteomes" id="UP000000245">
    <property type="component" value="Chromosome"/>
</dbReference>
<dbReference type="GO" id="GO:1990904">
    <property type="term" value="C:ribonucleoprotein complex"/>
    <property type="evidence" value="ECO:0007669"/>
    <property type="project" value="UniProtKB-KW"/>
</dbReference>
<dbReference type="GO" id="GO:0005840">
    <property type="term" value="C:ribosome"/>
    <property type="evidence" value="ECO:0007669"/>
    <property type="project" value="UniProtKB-KW"/>
</dbReference>
<dbReference type="GO" id="GO:0019843">
    <property type="term" value="F:rRNA binding"/>
    <property type="evidence" value="ECO:0007669"/>
    <property type="project" value="UniProtKB-UniRule"/>
</dbReference>
<dbReference type="GO" id="GO:0003735">
    <property type="term" value="F:structural constituent of ribosome"/>
    <property type="evidence" value="ECO:0007669"/>
    <property type="project" value="InterPro"/>
</dbReference>
<dbReference type="GO" id="GO:0006412">
    <property type="term" value="P:translation"/>
    <property type="evidence" value="ECO:0007669"/>
    <property type="project" value="UniProtKB-UniRule"/>
</dbReference>
<dbReference type="FunFam" id="3.30.420.80:FF:000001">
    <property type="entry name" value="30S ribosomal protein S11"/>
    <property type="match status" value="1"/>
</dbReference>
<dbReference type="Gene3D" id="3.30.420.80">
    <property type="entry name" value="Ribosomal protein S11"/>
    <property type="match status" value="1"/>
</dbReference>
<dbReference type="HAMAP" id="MF_01310">
    <property type="entry name" value="Ribosomal_uS11"/>
    <property type="match status" value="1"/>
</dbReference>
<dbReference type="InterPro" id="IPR001971">
    <property type="entry name" value="Ribosomal_uS11"/>
</dbReference>
<dbReference type="InterPro" id="IPR019981">
    <property type="entry name" value="Ribosomal_uS11_bac-type"/>
</dbReference>
<dbReference type="InterPro" id="IPR018102">
    <property type="entry name" value="Ribosomal_uS11_CS"/>
</dbReference>
<dbReference type="InterPro" id="IPR036967">
    <property type="entry name" value="Ribosomal_uS11_sf"/>
</dbReference>
<dbReference type="NCBIfam" id="NF003698">
    <property type="entry name" value="PRK05309.1"/>
    <property type="match status" value="1"/>
</dbReference>
<dbReference type="NCBIfam" id="TIGR03632">
    <property type="entry name" value="uS11_bact"/>
    <property type="match status" value="1"/>
</dbReference>
<dbReference type="PANTHER" id="PTHR11759">
    <property type="entry name" value="40S RIBOSOMAL PROTEIN S14/30S RIBOSOMAL PROTEIN S11"/>
    <property type="match status" value="1"/>
</dbReference>
<dbReference type="Pfam" id="PF00411">
    <property type="entry name" value="Ribosomal_S11"/>
    <property type="match status" value="1"/>
</dbReference>
<dbReference type="PIRSF" id="PIRSF002131">
    <property type="entry name" value="Ribosomal_S11"/>
    <property type="match status" value="1"/>
</dbReference>
<dbReference type="SUPFAM" id="SSF53137">
    <property type="entry name" value="Translational machinery components"/>
    <property type="match status" value="1"/>
</dbReference>
<dbReference type="PROSITE" id="PS00054">
    <property type="entry name" value="RIBOSOMAL_S11"/>
    <property type="match status" value="1"/>
</dbReference>
<comment type="function">
    <text evidence="1">Located on the platform of the 30S subunit, it bridges several disparate RNA helices of the 16S rRNA. Forms part of the Shine-Dalgarno cleft in the 70S ribosome.</text>
</comment>
<comment type="subunit">
    <text evidence="1">Part of the 30S ribosomal subunit. Interacts with proteins S7 and S18. Binds to IF-3.</text>
</comment>
<comment type="similarity">
    <text evidence="1">Belongs to the universal ribosomal protein uS11 family.</text>
</comment>